<reference key="1">
    <citation type="journal article" date="2001" name="Nature">
        <title>Genome sequence of enterohaemorrhagic Escherichia coli O157:H7.</title>
        <authorList>
            <person name="Perna N.T."/>
            <person name="Plunkett G. III"/>
            <person name="Burland V."/>
            <person name="Mau B."/>
            <person name="Glasner J.D."/>
            <person name="Rose D.J."/>
            <person name="Mayhew G.F."/>
            <person name="Evans P.S."/>
            <person name="Gregor J."/>
            <person name="Kirkpatrick H.A."/>
            <person name="Posfai G."/>
            <person name="Hackett J."/>
            <person name="Klink S."/>
            <person name="Boutin A."/>
            <person name="Shao Y."/>
            <person name="Miller L."/>
            <person name="Grotbeck E.J."/>
            <person name="Davis N.W."/>
            <person name="Lim A."/>
            <person name="Dimalanta E.T."/>
            <person name="Potamousis K."/>
            <person name="Apodaca J."/>
            <person name="Anantharaman T.S."/>
            <person name="Lin J."/>
            <person name="Yen G."/>
            <person name="Schwartz D.C."/>
            <person name="Welch R.A."/>
            <person name="Blattner F.R."/>
        </authorList>
    </citation>
    <scope>NUCLEOTIDE SEQUENCE [LARGE SCALE GENOMIC DNA]</scope>
    <source>
        <strain>O157:H7 / EDL933 / ATCC 700927 / EHEC</strain>
    </source>
</reference>
<reference key="2">
    <citation type="journal article" date="2001" name="DNA Res.">
        <title>Complete genome sequence of enterohemorrhagic Escherichia coli O157:H7 and genomic comparison with a laboratory strain K-12.</title>
        <authorList>
            <person name="Hayashi T."/>
            <person name="Makino K."/>
            <person name="Ohnishi M."/>
            <person name="Kurokawa K."/>
            <person name="Ishii K."/>
            <person name="Yokoyama K."/>
            <person name="Han C.-G."/>
            <person name="Ohtsubo E."/>
            <person name="Nakayama K."/>
            <person name="Murata T."/>
            <person name="Tanaka M."/>
            <person name="Tobe T."/>
            <person name="Iida T."/>
            <person name="Takami H."/>
            <person name="Honda T."/>
            <person name="Sasakawa C."/>
            <person name="Ogasawara N."/>
            <person name="Yasunaga T."/>
            <person name="Kuhara S."/>
            <person name="Shiba T."/>
            <person name="Hattori M."/>
            <person name="Shinagawa H."/>
        </authorList>
    </citation>
    <scope>NUCLEOTIDE SEQUENCE [LARGE SCALE GENOMIC DNA]</scope>
    <source>
        <strain>O157:H7 / Sakai / RIMD 0509952 / EHEC</strain>
    </source>
</reference>
<dbReference type="EC" id="4.2.1.1" evidence="1"/>
<dbReference type="EMBL" id="AE005174">
    <property type="protein sequence ID" value="AAG54688.1"/>
    <property type="molecule type" value="Genomic_DNA"/>
</dbReference>
<dbReference type="EMBL" id="BA000007">
    <property type="protein sequence ID" value="BAB33815.2"/>
    <property type="molecule type" value="Genomic_DNA"/>
</dbReference>
<dbReference type="PIR" id="D85528">
    <property type="entry name" value="D85528"/>
</dbReference>
<dbReference type="PIR" id="H90677">
    <property type="entry name" value="H90677"/>
</dbReference>
<dbReference type="RefSeq" id="NP_308419.1">
    <property type="nucleotide sequence ID" value="NC_002695.1"/>
</dbReference>
<dbReference type="RefSeq" id="WP_000658652.1">
    <property type="nucleotide sequence ID" value="NZ_VOAI01000005.1"/>
</dbReference>
<dbReference type="SMR" id="P0ABF0"/>
<dbReference type="STRING" id="155864.Z0435"/>
<dbReference type="GeneID" id="75202502"/>
<dbReference type="GeneID" id="914494"/>
<dbReference type="KEGG" id="ece:Z0435"/>
<dbReference type="KEGG" id="ecs:ECs_0392"/>
<dbReference type="PATRIC" id="fig|386585.9.peg.487"/>
<dbReference type="eggNOG" id="COG0288">
    <property type="taxonomic scope" value="Bacteria"/>
</dbReference>
<dbReference type="HOGENOM" id="CLU_053879_5_3_6"/>
<dbReference type="OMA" id="MPNVAAW"/>
<dbReference type="Proteomes" id="UP000000558">
    <property type="component" value="Chromosome"/>
</dbReference>
<dbReference type="Proteomes" id="UP000002519">
    <property type="component" value="Chromosome"/>
</dbReference>
<dbReference type="GO" id="GO:0004089">
    <property type="term" value="F:carbonate dehydratase activity"/>
    <property type="evidence" value="ECO:0007669"/>
    <property type="project" value="UniProtKB-EC"/>
</dbReference>
<dbReference type="GO" id="GO:0008270">
    <property type="term" value="F:zinc ion binding"/>
    <property type="evidence" value="ECO:0007669"/>
    <property type="project" value="InterPro"/>
</dbReference>
<dbReference type="GO" id="GO:0015976">
    <property type="term" value="P:carbon utilization"/>
    <property type="evidence" value="ECO:0007669"/>
    <property type="project" value="InterPro"/>
</dbReference>
<dbReference type="CDD" id="cd00884">
    <property type="entry name" value="beta_CA_cladeB"/>
    <property type="match status" value="1"/>
</dbReference>
<dbReference type="FunFam" id="3.40.1050.10:FF:000004">
    <property type="entry name" value="Carbonic anhydrase"/>
    <property type="match status" value="1"/>
</dbReference>
<dbReference type="Gene3D" id="3.40.1050.10">
    <property type="entry name" value="Carbonic anhydrase"/>
    <property type="match status" value="1"/>
</dbReference>
<dbReference type="InterPro" id="IPR045066">
    <property type="entry name" value="Beta_CA_cladeB"/>
</dbReference>
<dbReference type="InterPro" id="IPR001765">
    <property type="entry name" value="Carbonic_anhydrase"/>
</dbReference>
<dbReference type="InterPro" id="IPR015892">
    <property type="entry name" value="Carbonic_anhydrase_CS"/>
</dbReference>
<dbReference type="InterPro" id="IPR036874">
    <property type="entry name" value="Carbonic_anhydrase_sf"/>
</dbReference>
<dbReference type="PANTHER" id="PTHR11002">
    <property type="entry name" value="CARBONIC ANHYDRASE"/>
    <property type="match status" value="1"/>
</dbReference>
<dbReference type="PANTHER" id="PTHR11002:SF42">
    <property type="entry name" value="CARBONIC ANHYDRASE 1"/>
    <property type="match status" value="1"/>
</dbReference>
<dbReference type="Pfam" id="PF00484">
    <property type="entry name" value="Pro_CA"/>
    <property type="match status" value="1"/>
</dbReference>
<dbReference type="SMART" id="SM00947">
    <property type="entry name" value="Pro_CA"/>
    <property type="match status" value="1"/>
</dbReference>
<dbReference type="SUPFAM" id="SSF53056">
    <property type="entry name" value="beta-carbonic anhydrase, cab"/>
    <property type="match status" value="1"/>
</dbReference>
<dbReference type="PROSITE" id="PS00704">
    <property type="entry name" value="PROK_CO2_ANHYDRASE_1"/>
    <property type="match status" value="1"/>
</dbReference>
<dbReference type="PROSITE" id="PS00705">
    <property type="entry name" value="PROK_CO2_ANHYDRASE_2"/>
    <property type="match status" value="1"/>
</dbReference>
<evidence type="ECO:0000250" key="1">
    <source>
        <dbReference type="UniProtKB" id="P0ABE9"/>
    </source>
</evidence>
<evidence type="ECO:0000250" key="2">
    <source>
        <dbReference type="UniProtKB" id="P9WPJ7"/>
    </source>
</evidence>
<evidence type="ECO:0000305" key="3"/>
<accession>P0ABF0</accession>
<accession>P17582</accession>
<accession>P78278</accession>
<organism>
    <name type="scientific">Escherichia coli O157:H7</name>
    <dbReference type="NCBI Taxonomy" id="83334"/>
    <lineage>
        <taxon>Bacteria</taxon>
        <taxon>Pseudomonadati</taxon>
        <taxon>Pseudomonadota</taxon>
        <taxon>Gammaproteobacteria</taxon>
        <taxon>Enterobacterales</taxon>
        <taxon>Enterobacteriaceae</taxon>
        <taxon>Escherichia</taxon>
    </lineage>
</organism>
<protein>
    <recommendedName>
        <fullName evidence="1">Carbonic anhydrase 1</fullName>
        <ecNumber evidence="1">4.2.1.1</ecNumber>
    </recommendedName>
    <alternativeName>
        <fullName evidence="1">Carbonate dehydratase 1</fullName>
    </alternativeName>
</protein>
<name>CYNT_ECO57</name>
<proteinExistence type="inferred from homology"/>
<sequence length="219" mass="23764">MKEIIDGFLKFQREAFPKREALFKQLATQQSPRTLFISCSDSRLVPELVTQREPGDLFVIRNAGNIVPSYGPEPGGVSASVEYAVAALRVSDIVICGHSNCGAMTAIASCQCMDHMPAVSHWLRYADSARVVNEARPHSDLPSKAAAMVRENVIAQLANLQTHPSVRLALEEGRIALHGWVYDIESGSIAAFDGATRQFVPLAANPRVCAIPLRQPTAA</sequence>
<comment type="function">
    <text evidence="1">Reversible hydration of carbon dioxide. Carbon dioxide formed in the bicarbonate-dependent decomposition of cyanate by cyanase (CynS) diffuses out of the cell faster than it would be hydrated to bicarbonate, so the apparent function of this enzyme is to catalyze the hydration of carbon dioxide and thus prevent depletion of cellular bicarbonate.</text>
</comment>
<comment type="catalytic activity">
    <reaction evidence="1">
        <text>hydrogencarbonate + H(+) = CO2 + H2O</text>
        <dbReference type="Rhea" id="RHEA:10748"/>
        <dbReference type="ChEBI" id="CHEBI:15377"/>
        <dbReference type="ChEBI" id="CHEBI:15378"/>
        <dbReference type="ChEBI" id="CHEBI:16526"/>
        <dbReference type="ChEBI" id="CHEBI:17544"/>
        <dbReference type="EC" id="4.2.1.1"/>
    </reaction>
</comment>
<comment type="cofactor">
    <cofactor evidence="1">
        <name>Zn(2+)</name>
        <dbReference type="ChEBI" id="CHEBI:29105"/>
    </cofactor>
    <text evidence="1">Binds 1 zinc ion per subunit.</text>
</comment>
<comment type="subunit">
    <text evidence="1">Oligomer.</text>
</comment>
<comment type="similarity">
    <text evidence="3">Belongs to the beta-class carbonic anhydrase family.</text>
</comment>
<keyword id="KW-0456">Lyase</keyword>
<keyword id="KW-0479">Metal-binding</keyword>
<keyword id="KW-1185">Reference proteome</keyword>
<keyword id="KW-0862">Zinc</keyword>
<feature type="chain" id="PRO_0000077460" description="Carbonic anhydrase 1">
    <location>
        <begin position="1"/>
        <end position="219"/>
    </location>
</feature>
<feature type="binding site" evidence="2">
    <location>
        <position position="39"/>
    </location>
    <ligand>
        <name>Zn(2+)</name>
        <dbReference type="ChEBI" id="CHEBI:29105"/>
    </ligand>
</feature>
<feature type="binding site" evidence="2">
    <location>
        <position position="41"/>
    </location>
    <ligand>
        <name>Zn(2+)</name>
        <dbReference type="ChEBI" id="CHEBI:29105"/>
    </ligand>
</feature>
<feature type="binding site" evidence="2">
    <location>
        <position position="98"/>
    </location>
    <ligand>
        <name>Zn(2+)</name>
        <dbReference type="ChEBI" id="CHEBI:29105"/>
    </ligand>
</feature>
<feature type="binding site" evidence="2">
    <location>
        <position position="101"/>
    </location>
    <ligand>
        <name>Zn(2+)</name>
        <dbReference type="ChEBI" id="CHEBI:29105"/>
    </ligand>
</feature>
<gene>
    <name type="primary">cynT</name>
    <name type="ordered locus">Z0435</name>
    <name type="ordered locus">ECs0392</name>
</gene>